<name>EFTS_CLOAB</name>
<dbReference type="EMBL" id="AE001437">
    <property type="protein sequence ID" value="AAK79753.1"/>
    <property type="molecule type" value="Genomic_DNA"/>
</dbReference>
<dbReference type="PIR" id="F97120">
    <property type="entry name" value="F97120"/>
</dbReference>
<dbReference type="RefSeq" id="NP_348413.1">
    <property type="nucleotide sequence ID" value="NC_003030.1"/>
</dbReference>
<dbReference type="RefSeq" id="WP_010965094.1">
    <property type="nucleotide sequence ID" value="NC_003030.1"/>
</dbReference>
<dbReference type="SMR" id="Q97I65"/>
<dbReference type="STRING" id="272562.CA_C1788"/>
<dbReference type="GeneID" id="44998282"/>
<dbReference type="KEGG" id="cac:CA_C1788"/>
<dbReference type="PATRIC" id="fig|272562.8.peg.1994"/>
<dbReference type="eggNOG" id="COG0264">
    <property type="taxonomic scope" value="Bacteria"/>
</dbReference>
<dbReference type="HOGENOM" id="CLU_047155_0_0_9"/>
<dbReference type="OrthoDB" id="9808348at2"/>
<dbReference type="Proteomes" id="UP000000814">
    <property type="component" value="Chromosome"/>
</dbReference>
<dbReference type="GO" id="GO:0005737">
    <property type="term" value="C:cytoplasm"/>
    <property type="evidence" value="ECO:0007669"/>
    <property type="project" value="UniProtKB-SubCell"/>
</dbReference>
<dbReference type="GO" id="GO:0003746">
    <property type="term" value="F:translation elongation factor activity"/>
    <property type="evidence" value="ECO:0007669"/>
    <property type="project" value="UniProtKB-UniRule"/>
</dbReference>
<dbReference type="CDD" id="cd14275">
    <property type="entry name" value="UBA_EF-Ts"/>
    <property type="match status" value="1"/>
</dbReference>
<dbReference type="FunFam" id="1.10.286.20:FF:000001">
    <property type="entry name" value="Elongation factor Ts"/>
    <property type="match status" value="1"/>
</dbReference>
<dbReference type="FunFam" id="1.10.8.10:FF:000001">
    <property type="entry name" value="Elongation factor Ts"/>
    <property type="match status" value="1"/>
</dbReference>
<dbReference type="Gene3D" id="1.10.286.20">
    <property type="match status" value="1"/>
</dbReference>
<dbReference type="Gene3D" id="1.10.8.10">
    <property type="entry name" value="DNA helicase RuvA subunit, C-terminal domain"/>
    <property type="match status" value="1"/>
</dbReference>
<dbReference type="Gene3D" id="3.30.479.20">
    <property type="entry name" value="Elongation factor Ts, dimerisation domain"/>
    <property type="match status" value="2"/>
</dbReference>
<dbReference type="HAMAP" id="MF_00050">
    <property type="entry name" value="EF_Ts"/>
    <property type="match status" value="1"/>
</dbReference>
<dbReference type="InterPro" id="IPR036402">
    <property type="entry name" value="EF-Ts_dimer_sf"/>
</dbReference>
<dbReference type="InterPro" id="IPR001816">
    <property type="entry name" value="Transl_elong_EFTs/EF1B"/>
</dbReference>
<dbReference type="InterPro" id="IPR014039">
    <property type="entry name" value="Transl_elong_EFTs/EF1B_dimer"/>
</dbReference>
<dbReference type="InterPro" id="IPR018101">
    <property type="entry name" value="Transl_elong_Ts_CS"/>
</dbReference>
<dbReference type="InterPro" id="IPR009060">
    <property type="entry name" value="UBA-like_sf"/>
</dbReference>
<dbReference type="NCBIfam" id="TIGR00116">
    <property type="entry name" value="tsf"/>
    <property type="match status" value="1"/>
</dbReference>
<dbReference type="PANTHER" id="PTHR11741">
    <property type="entry name" value="ELONGATION FACTOR TS"/>
    <property type="match status" value="1"/>
</dbReference>
<dbReference type="PANTHER" id="PTHR11741:SF0">
    <property type="entry name" value="ELONGATION FACTOR TS, MITOCHONDRIAL"/>
    <property type="match status" value="1"/>
</dbReference>
<dbReference type="Pfam" id="PF00889">
    <property type="entry name" value="EF_TS"/>
    <property type="match status" value="1"/>
</dbReference>
<dbReference type="SUPFAM" id="SSF54713">
    <property type="entry name" value="Elongation factor Ts (EF-Ts), dimerisation domain"/>
    <property type="match status" value="2"/>
</dbReference>
<dbReference type="SUPFAM" id="SSF46934">
    <property type="entry name" value="UBA-like"/>
    <property type="match status" value="1"/>
</dbReference>
<dbReference type="PROSITE" id="PS01126">
    <property type="entry name" value="EF_TS_1"/>
    <property type="match status" value="1"/>
</dbReference>
<dbReference type="PROSITE" id="PS01127">
    <property type="entry name" value="EF_TS_2"/>
    <property type="match status" value="1"/>
</dbReference>
<evidence type="ECO:0000255" key="1">
    <source>
        <dbReference type="HAMAP-Rule" id="MF_00050"/>
    </source>
</evidence>
<reference key="1">
    <citation type="journal article" date="2001" name="J. Bacteriol.">
        <title>Genome sequence and comparative analysis of the solvent-producing bacterium Clostridium acetobutylicum.</title>
        <authorList>
            <person name="Noelling J."/>
            <person name="Breton G."/>
            <person name="Omelchenko M.V."/>
            <person name="Makarova K.S."/>
            <person name="Zeng Q."/>
            <person name="Gibson R."/>
            <person name="Lee H.M."/>
            <person name="Dubois J."/>
            <person name="Qiu D."/>
            <person name="Hitti J."/>
            <person name="Wolf Y.I."/>
            <person name="Tatusov R.L."/>
            <person name="Sabathe F."/>
            <person name="Doucette-Stamm L.A."/>
            <person name="Soucaille P."/>
            <person name="Daly M.J."/>
            <person name="Bennett G.N."/>
            <person name="Koonin E.V."/>
            <person name="Smith D.R."/>
        </authorList>
    </citation>
    <scope>NUCLEOTIDE SEQUENCE [LARGE SCALE GENOMIC DNA]</scope>
    <source>
        <strain>ATCC 824 / DSM 792 / JCM 1419 / IAM 19013 / LMG 5710 / NBRC 13948 / NRRL B-527 / VKM B-1787 / 2291 / W</strain>
    </source>
</reference>
<sequence length="306" mass="33592">MISASAVKELRERTGAGMMACKKALSEANGDSEKAVEILREKGLAAAAKKAGRVASEGLVVAYVNEDGKSGAIAEVNCETDFVSANEDFKALAENIVKLAAKSNSNTVEELLEENYVDGSSKLKDVITALIAKLGENINLRRFTKFSNENGTIQSYIHGDGRIGVLVNLNADKISDEVHTLAKDICMQIAAANPLYLDETSVDQTALDKEREIYKVQALNEGKPEKIVEKMVEGRIKKYLKEVCLLDQVWVRDSDLTISKLVAKKSKELSAAISIADFVRFERGEGIEKKEENFAEEVQKQMQQSK</sequence>
<organism>
    <name type="scientific">Clostridium acetobutylicum (strain ATCC 824 / DSM 792 / JCM 1419 / IAM 19013 / LMG 5710 / NBRC 13948 / NRRL B-527 / VKM B-1787 / 2291 / W)</name>
    <dbReference type="NCBI Taxonomy" id="272562"/>
    <lineage>
        <taxon>Bacteria</taxon>
        <taxon>Bacillati</taxon>
        <taxon>Bacillota</taxon>
        <taxon>Clostridia</taxon>
        <taxon>Eubacteriales</taxon>
        <taxon>Clostridiaceae</taxon>
        <taxon>Clostridium</taxon>
    </lineage>
</organism>
<gene>
    <name evidence="1" type="primary">tsf</name>
    <name type="ordered locus">CA_C1788</name>
</gene>
<protein>
    <recommendedName>
        <fullName evidence="1">Elongation factor Ts</fullName>
        <shortName evidence="1">EF-Ts</shortName>
    </recommendedName>
</protein>
<keyword id="KW-0963">Cytoplasm</keyword>
<keyword id="KW-0251">Elongation factor</keyword>
<keyword id="KW-0648">Protein biosynthesis</keyword>
<keyword id="KW-1185">Reference proteome</keyword>
<comment type="function">
    <text evidence="1">Associates with the EF-Tu.GDP complex and induces the exchange of GDP to GTP. It remains bound to the aminoacyl-tRNA.EF-Tu.GTP complex up to the GTP hydrolysis stage on the ribosome.</text>
</comment>
<comment type="subcellular location">
    <subcellularLocation>
        <location evidence="1">Cytoplasm</location>
    </subcellularLocation>
</comment>
<comment type="similarity">
    <text evidence="1">Belongs to the EF-Ts family.</text>
</comment>
<feature type="chain" id="PRO_0000161107" description="Elongation factor Ts">
    <location>
        <begin position="1"/>
        <end position="306"/>
    </location>
</feature>
<feature type="region of interest" description="Involved in Mg(2+) ion dislocation from EF-Tu" evidence="1">
    <location>
        <begin position="80"/>
        <end position="83"/>
    </location>
</feature>
<accession>Q97I65</accession>
<proteinExistence type="inferred from homology"/>